<comment type="function">
    <text>May play a role as a mediator of inflammation and angiogenesis.</text>
</comment>
<comment type="developmental stage">
    <text>In 10-day embryos B94 is expressed prominently in the myocardium and in the aortic arch. By the 15th day of gestation, expression is restricted largely to the liver, the bone forming regions of the jaw, the aortic endothelium, and the nasopharynx: a pattern that is maintained until just prior to birth. Postnatally, expression shifts to the red pulp of the spleen and the thymic medulla.</text>
</comment>
<comment type="similarity">
    <text evidence="2">Belongs to the SEC6 family.</text>
</comment>
<comment type="sequence caution" evidence="2">
    <conflict type="erroneous initiation">
        <sequence resource="EMBL-CDS" id="AAA72044"/>
    </conflict>
    <text>Truncated N-terminus.</text>
</comment>
<reference key="1">
    <citation type="journal article" date="2005" name="Science">
        <title>The transcriptional landscape of the mammalian genome.</title>
        <authorList>
            <person name="Carninci P."/>
            <person name="Kasukawa T."/>
            <person name="Katayama S."/>
            <person name="Gough J."/>
            <person name="Frith M.C."/>
            <person name="Maeda N."/>
            <person name="Oyama R."/>
            <person name="Ravasi T."/>
            <person name="Lenhard B."/>
            <person name="Wells C."/>
            <person name="Kodzius R."/>
            <person name="Shimokawa K."/>
            <person name="Bajic V.B."/>
            <person name="Brenner S.E."/>
            <person name="Batalov S."/>
            <person name="Forrest A.R."/>
            <person name="Zavolan M."/>
            <person name="Davis M.J."/>
            <person name="Wilming L.G."/>
            <person name="Aidinis V."/>
            <person name="Allen J.E."/>
            <person name="Ambesi-Impiombato A."/>
            <person name="Apweiler R."/>
            <person name="Aturaliya R.N."/>
            <person name="Bailey T.L."/>
            <person name="Bansal M."/>
            <person name="Baxter L."/>
            <person name="Beisel K.W."/>
            <person name="Bersano T."/>
            <person name="Bono H."/>
            <person name="Chalk A.M."/>
            <person name="Chiu K.P."/>
            <person name="Choudhary V."/>
            <person name="Christoffels A."/>
            <person name="Clutterbuck D.R."/>
            <person name="Crowe M.L."/>
            <person name="Dalla E."/>
            <person name="Dalrymple B.P."/>
            <person name="de Bono B."/>
            <person name="Della Gatta G."/>
            <person name="di Bernardo D."/>
            <person name="Down T."/>
            <person name="Engstrom P."/>
            <person name="Fagiolini M."/>
            <person name="Faulkner G."/>
            <person name="Fletcher C.F."/>
            <person name="Fukushima T."/>
            <person name="Furuno M."/>
            <person name="Futaki S."/>
            <person name="Gariboldi M."/>
            <person name="Georgii-Hemming P."/>
            <person name="Gingeras T.R."/>
            <person name="Gojobori T."/>
            <person name="Green R.E."/>
            <person name="Gustincich S."/>
            <person name="Harbers M."/>
            <person name="Hayashi Y."/>
            <person name="Hensch T.K."/>
            <person name="Hirokawa N."/>
            <person name="Hill D."/>
            <person name="Huminiecki L."/>
            <person name="Iacono M."/>
            <person name="Ikeo K."/>
            <person name="Iwama A."/>
            <person name="Ishikawa T."/>
            <person name="Jakt M."/>
            <person name="Kanapin A."/>
            <person name="Katoh M."/>
            <person name="Kawasawa Y."/>
            <person name="Kelso J."/>
            <person name="Kitamura H."/>
            <person name="Kitano H."/>
            <person name="Kollias G."/>
            <person name="Krishnan S.P."/>
            <person name="Kruger A."/>
            <person name="Kummerfeld S.K."/>
            <person name="Kurochkin I.V."/>
            <person name="Lareau L.F."/>
            <person name="Lazarevic D."/>
            <person name="Lipovich L."/>
            <person name="Liu J."/>
            <person name="Liuni S."/>
            <person name="McWilliam S."/>
            <person name="Madan Babu M."/>
            <person name="Madera M."/>
            <person name="Marchionni L."/>
            <person name="Matsuda H."/>
            <person name="Matsuzawa S."/>
            <person name="Miki H."/>
            <person name="Mignone F."/>
            <person name="Miyake S."/>
            <person name="Morris K."/>
            <person name="Mottagui-Tabar S."/>
            <person name="Mulder N."/>
            <person name="Nakano N."/>
            <person name="Nakauchi H."/>
            <person name="Ng P."/>
            <person name="Nilsson R."/>
            <person name="Nishiguchi S."/>
            <person name="Nishikawa S."/>
            <person name="Nori F."/>
            <person name="Ohara O."/>
            <person name="Okazaki Y."/>
            <person name="Orlando V."/>
            <person name="Pang K.C."/>
            <person name="Pavan W.J."/>
            <person name="Pavesi G."/>
            <person name="Pesole G."/>
            <person name="Petrovsky N."/>
            <person name="Piazza S."/>
            <person name="Reed J."/>
            <person name="Reid J.F."/>
            <person name="Ring B.Z."/>
            <person name="Ringwald M."/>
            <person name="Rost B."/>
            <person name="Ruan Y."/>
            <person name="Salzberg S.L."/>
            <person name="Sandelin A."/>
            <person name="Schneider C."/>
            <person name="Schoenbach C."/>
            <person name="Sekiguchi K."/>
            <person name="Semple C.A."/>
            <person name="Seno S."/>
            <person name="Sessa L."/>
            <person name="Sheng Y."/>
            <person name="Shibata Y."/>
            <person name="Shimada H."/>
            <person name="Shimada K."/>
            <person name="Silva D."/>
            <person name="Sinclair B."/>
            <person name="Sperling S."/>
            <person name="Stupka E."/>
            <person name="Sugiura K."/>
            <person name="Sultana R."/>
            <person name="Takenaka Y."/>
            <person name="Taki K."/>
            <person name="Tammoja K."/>
            <person name="Tan S.L."/>
            <person name="Tang S."/>
            <person name="Taylor M.S."/>
            <person name="Tegner J."/>
            <person name="Teichmann S.A."/>
            <person name="Ueda H.R."/>
            <person name="van Nimwegen E."/>
            <person name="Verardo R."/>
            <person name="Wei C.L."/>
            <person name="Yagi K."/>
            <person name="Yamanishi H."/>
            <person name="Zabarovsky E."/>
            <person name="Zhu S."/>
            <person name="Zimmer A."/>
            <person name="Hide W."/>
            <person name="Bult C."/>
            <person name="Grimmond S.M."/>
            <person name="Teasdale R.D."/>
            <person name="Liu E.T."/>
            <person name="Brusic V."/>
            <person name="Quackenbush J."/>
            <person name="Wahlestedt C."/>
            <person name="Mattick J.S."/>
            <person name="Hume D.A."/>
            <person name="Kai C."/>
            <person name="Sasaki D."/>
            <person name="Tomaru Y."/>
            <person name="Fukuda S."/>
            <person name="Kanamori-Katayama M."/>
            <person name="Suzuki M."/>
            <person name="Aoki J."/>
            <person name="Arakawa T."/>
            <person name="Iida J."/>
            <person name="Imamura K."/>
            <person name="Itoh M."/>
            <person name="Kato T."/>
            <person name="Kawaji H."/>
            <person name="Kawagashira N."/>
            <person name="Kawashima T."/>
            <person name="Kojima M."/>
            <person name="Kondo S."/>
            <person name="Konno H."/>
            <person name="Nakano K."/>
            <person name="Ninomiya N."/>
            <person name="Nishio T."/>
            <person name="Okada M."/>
            <person name="Plessy C."/>
            <person name="Shibata K."/>
            <person name="Shiraki T."/>
            <person name="Suzuki S."/>
            <person name="Tagami M."/>
            <person name="Waki K."/>
            <person name="Watahiki A."/>
            <person name="Okamura-Oho Y."/>
            <person name="Suzuki H."/>
            <person name="Kawai J."/>
            <person name="Hayashizaki Y."/>
        </authorList>
    </citation>
    <scope>NUCLEOTIDE SEQUENCE [LARGE SCALE MRNA]</scope>
    <source>
        <strain>NOD</strain>
        <tissue>Spleen</tissue>
    </source>
</reference>
<reference key="2">
    <citation type="journal article" date="1994" name="J. Biol. Chem.">
        <title>B94, a primary response gene inducible by tumor necrosis factor-alpha, is expressed in developing hematopoietic tissues and the sperm acrosome.</title>
        <authorList>
            <person name="Wolf F.W."/>
            <person name="Sarma V."/>
            <person name="Seldin M."/>
            <person name="Drake S."/>
            <person name="Suchard S.J."/>
            <person name="Shao H."/>
            <person name="O'Shea K.S."/>
            <person name="Dixit V.M."/>
        </authorList>
    </citation>
    <scope>NUCLEOTIDE SEQUENCE [MRNA] OF 7-691</scope>
</reference>
<reference key="3">
    <citation type="journal article" date="2004" name="Genome Res.">
        <title>The status, quality, and expansion of the NIH full-length cDNA project: the Mammalian Gene Collection (MGC).</title>
        <authorList>
            <consortium name="The MGC Project Team"/>
        </authorList>
    </citation>
    <scope>NUCLEOTIDE SEQUENCE [LARGE SCALE MRNA] OF 489-691</scope>
</reference>
<reference key="4">
    <citation type="journal article" date="2010" name="Cell">
        <title>A tissue-specific atlas of mouse protein phosphorylation and expression.</title>
        <authorList>
            <person name="Huttlin E.L."/>
            <person name="Jedrychowski M.P."/>
            <person name="Elias J.E."/>
            <person name="Goswami T."/>
            <person name="Rad R."/>
            <person name="Beausoleil S.A."/>
            <person name="Villen J."/>
            <person name="Haas W."/>
            <person name="Sowa M.E."/>
            <person name="Gygi S.P."/>
        </authorList>
    </citation>
    <scope>IDENTIFICATION BY MASS SPECTROMETRY [LARGE SCALE ANALYSIS]</scope>
    <source>
        <tissue>Spleen</tissue>
    </source>
</reference>
<dbReference type="EMBL" id="AK154405">
    <property type="protein sequence ID" value="BAE32563.1"/>
    <property type="molecule type" value="mRNA"/>
</dbReference>
<dbReference type="EMBL" id="AK170719">
    <property type="protein sequence ID" value="BAE41977.1"/>
    <property type="molecule type" value="mRNA"/>
</dbReference>
<dbReference type="EMBL" id="AK172653">
    <property type="protein sequence ID" value="BAE43114.1"/>
    <property type="molecule type" value="mRNA"/>
</dbReference>
<dbReference type="EMBL" id="L24118">
    <property type="protein sequence ID" value="AAA72044.1"/>
    <property type="status" value="ALT_INIT"/>
    <property type="molecule type" value="mRNA"/>
</dbReference>
<dbReference type="EMBL" id="BC008165">
    <property type="protein sequence ID" value="AAH08165.1"/>
    <property type="molecule type" value="mRNA"/>
</dbReference>
<dbReference type="CCDS" id="CCDS26178.2"/>
<dbReference type="PIR" id="I49523">
    <property type="entry name" value="I49523"/>
</dbReference>
<dbReference type="RefSeq" id="NP_033422.2">
    <property type="nucleotide sequence ID" value="NM_009396.2"/>
</dbReference>
<dbReference type="PDB" id="5B86">
    <property type="method" value="X-ray"/>
    <property type="resolution" value="3.02 A"/>
    <property type="chains" value="A/B=94-691"/>
</dbReference>
<dbReference type="PDBsum" id="5B86"/>
<dbReference type="SMR" id="Q61333"/>
<dbReference type="FunCoup" id="Q61333">
    <property type="interactions" value="11"/>
</dbReference>
<dbReference type="STRING" id="10090.ENSMUSP00000099806"/>
<dbReference type="iPTMnet" id="Q61333"/>
<dbReference type="PhosphoSitePlus" id="Q61333"/>
<dbReference type="PaxDb" id="10090-ENSMUSP00000099806"/>
<dbReference type="ProteomicsDB" id="260717"/>
<dbReference type="Pumba" id="Q61333"/>
<dbReference type="Antibodypedia" id="3892">
    <property type="antibodies" value="194 antibodies from 31 providers"/>
</dbReference>
<dbReference type="DNASU" id="21928"/>
<dbReference type="Ensembl" id="ENSMUST00000102745.10">
    <property type="protein sequence ID" value="ENSMUSP00000099806.4"/>
    <property type="gene ID" value="ENSMUSG00000021281.16"/>
</dbReference>
<dbReference type="GeneID" id="21928"/>
<dbReference type="KEGG" id="mmu:21928"/>
<dbReference type="UCSC" id="uc007pcz.2">
    <property type="organism name" value="mouse"/>
</dbReference>
<dbReference type="AGR" id="MGI:104960"/>
<dbReference type="CTD" id="7127"/>
<dbReference type="MGI" id="MGI:104960">
    <property type="gene designation" value="Tnfaip2"/>
</dbReference>
<dbReference type="VEuPathDB" id="HostDB:ENSMUSG00000021281"/>
<dbReference type="eggNOG" id="KOG2286">
    <property type="taxonomic scope" value="Eukaryota"/>
</dbReference>
<dbReference type="GeneTree" id="ENSGT01030000234613"/>
<dbReference type="InParanoid" id="Q61333"/>
<dbReference type="OrthoDB" id="75991at9989"/>
<dbReference type="PhylomeDB" id="Q61333"/>
<dbReference type="TreeFam" id="TF314979"/>
<dbReference type="BioGRID-ORCS" id="21928">
    <property type="hits" value="2 hits in 78 CRISPR screens"/>
</dbReference>
<dbReference type="ChiTaRS" id="Tnfaip2">
    <property type="organism name" value="mouse"/>
</dbReference>
<dbReference type="PRO" id="PR:Q61333"/>
<dbReference type="Proteomes" id="UP000000589">
    <property type="component" value="Chromosome 12"/>
</dbReference>
<dbReference type="RNAct" id="Q61333">
    <property type="molecule type" value="protein"/>
</dbReference>
<dbReference type="Bgee" id="ENSMUSG00000021281">
    <property type="expression patterns" value="Expressed in decidua and 205 other cell types or tissues"/>
</dbReference>
<dbReference type="ExpressionAtlas" id="Q61333">
    <property type="expression patterns" value="baseline and differential"/>
</dbReference>
<dbReference type="GO" id="GO:0000145">
    <property type="term" value="C:exocyst"/>
    <property type="evidence" value="ECO:0007669"/>
    <property type="project" value="InterPro"/>
</dbReference>
<dbReference type="GO" id="GO:0001525">
    <property type="term" value="P:angiogenesis"/>
    <property type="evidence" value="ECO:0007669"/>
    <property type="project" value="UniProtKB-KW"/>
</dbReference>
<dbReference type="GO" id="GO:0030154">
    <property type="term" value="P:cell differentiation"/>
    <property type="evidence" value="ECO:0007669"/>
    <property type="project" value="UniProtKB-KW"/>
</dbReference>
<dbReference type="GO" id="GO:0006887">
    <property type="term" value="P:exocytosis"/>
    <property type="evidence" value="ECO:0007669"/>
    <property type="project" value="InterPro"/>
</dbReference>
<dbReference type="FunFam" id="1.10.357.70:FF:000004">
    <property type="entry name" value="Tumor necrosis factor alpha-induced protein 2"/>
    <property type="match status" value="1"/>
</dbReference>
<dbReference type="Gene3D" id="1.10.357.50">
    <property type="match status" value="1"/>
</dbReference>
<dbReference type="Gene3D" id="1.10.357.70">
    <property type="entry name" value="Exocyst complex component Sec6, C-terminal domain"/>
    <property type="match status" value="1"/>
</dbReference>
<dbReference type="InterPro" id="IPR010326">
    <property type="entry name" value="EXOC3/Sec6"/>
</dbReference>
<dbReference type="InterPro" id="IPR042532">
    <property type="entry name" value="EXOC3/Sec6_C"/>
</dbReference>
<dbReference type="PANTHER" id="PTHR21292">
    <property type="entry name" value="EXOCYST COMPLEX COMPONENT SEC6-RELATED"/>
    <property type="match status" value="1"/>
</dbReference>
<dbReference type="PANTHER" id="PTHR21292:SF4">
    <property type="entry name" value="TUMOR NECROSIS FACTOR ALPHA-INDUCED PROTEIN 2"/>
    <property type="match status" value="1"/>
</dbReference>
<dbReference type="Pfam" id="PF06046">
    <property type="entry name" value="Sec6"/>
    <property type="match status" value="1"/>
</dbReference>
<sequence length="691" mass="78102">MLKMVTFFQGFPGQQSVPGTLNFAVSPQKPRSTSEAESETSMSEASSEDLMPSPEAPDGEEESAKKKEKKSKGLANMFSVFTKGKKKKKDQPRLSDLEVQPKPRPELDGPLPTVEELKEALEHGRLEVAWQVLALERQLEAAAAAGGMSNEELVWRQSKVEALYVLLCDQVLGVLRRPLEAAPERLSQALAVVSQEELEDRRASGGPLAAALEATRPRRWLQRWRGVVAEVAAERLDAQPATAPEGRSEAESRFLHMGRTMKEDLEVVVERLKPLFPDEFNVVRTYAESYHYHFASHLCALAQFELCERDTYLLLLWVQNLYPNDILNSPKLAQELQGVGLGSLLPPKQIRLLEAMFLSNEVTSVKQLMARALELESQRWTQDVAPQSLDGHCHSELAIDILQIISQGQTKAENITSDVGMQIKQLLLVELAALLRSYQRAFDEFLEKSKLLRNYRVNIMANINNCLFFWTSVEQKWQISHDSLNRLLEPLKDLKAHGFDTLLQSLFLDLKPLFKKFTQTRWANPVETLEEIITTVSSSLPEFSELQDCFREELMETVHLHLVKEYIIRLCKRRLVLKTAEQQQQLARHILANADAIQGFCTENGSTATWLHRALPMIAEIIRLQDSSAIKIEVATYATWYPDFSKGHLNAILAIKGNLPSSEVRSIRNILDINTGVQEPPRPLFSLIKVT</sequence>
<keyword id="KW-0002">3D-structure</keyword>
<keyword id="KW-0037">Angiogenesis</keyword>
<keyword id="KW-0217">Developmental protein</keyword>
<keyword id="KW-0221">Differentiation</keyword>
<keyword id="KW-1185">Reference proteome</keyword>
<evidence type="ECO:0000256" key="1">
    <source>
        <dbReference type="SAM" id="MobiDB-lite"/>
    </source>
</evidence>
<evidence type="ECO:0000305" key="2"/>
<evidence type="ECO:0007829" key="3">
    <source>
        <dbReference type="PDB" id="5B86"/>
    </source>
</evidence>
<proteinExistence type="evidence at protein level"/>
<name>TNAP2_MOUSE</name>
<organism>
    <name type="scientific">Mus musculus</name>
    <name type="common">Mouse</name>
    <dbReference type="NCBI Taxonomy" id="10090"/>
    <lineage>
        <taxon>Eukaryota</taxon>
        <taxon>Metazoa</taxon>
        <taxon>Chordata</taxon>
        <taxon>Craniata</taxon>
        <taxon>Vertebrata</taxon>
        <taxon>Euteleostomi</taxon>
        <taxon>Mammalia</taxon>
        <taxon>Eutheria</taxon>
        <taxon>Euarchontoglires</taxon>
        <taxon>Glires</taxon>
        <taxon>Rodentia</taxon>
        <taxon>Myomorpha</taxon>
        <taxon>Muroidea</taxon>
        <taxon>Muridae</taxon>
        <taxon>Murinae</taxon>
        <taxon>Mus</taxon>
        <taxon>Mus</taxon>
    </lineage>
</organism>
<protein>
    <recommendedName>
        <fullName>Tumor necrosis factor alpha-induced protein 2</fullName>
        <shortName>TNF alpha-induced protein 2</shortName>
    </recommendedName>
    <alternativeName>
        <fullName>Primary response gene B94 protein</fullName>
    </alternativeName>
</protein>
<accession>Q61333</accession>
<accession>Q3T9B0</accession>
<accession>Q3TCH9</accession>
<accession>Q922G1</accession>
<gene>
    <name type="primary">Tnfaip2</name>
</gene>
<feature type="chain" id="PRO_0000118933" description="Tumor necrosis factor alpha-induced protein 2">
    <location>
        <begin position="1"/>
        <end position="691"/>
    </location>
</feature>
<feature type="region of interest" description="Disordered" evidence="1">
    <location>
        <begin position="9"/>
        <end position="111"/>
    </location>
</feature>
<feature type="compositionally biased region" description="Polar residues" evidence="1">
    <location>
        <begin position="12"/>
        <end position="31"/>
    </location>
</feature>
<feature type="compositionally biased region" description="Low complexity" evidence="1">
    <location>
        <begin position="33"/>
        <end position="45"/>
    </location>
</feature>
<feature type="compositionally biased region" description="Basic and acidic residues" evidence="1">
    <location>
        <begin position="91"/>
        <end position="107"/>
    </location>
</feature>
<feature type="sequence conflict" description="In Ref. 1; BAE41977." evidence="2" ref="1">
    <original>R</original>
    <variation>G</variation>
    <location>
        <position position="569"/>
    </location>
</feature>
<feature type="sequence conflict" description="In Ref. 1; BAE41977." evidence="2" ref="1">
    <original>L</original>
    <variation>P</variation>
    <location>
        <position position="687"/>
    </location>
</feature>
<feature type="helix" evidence="3">
    <location>
        <begin position="114"/>
        <end position="122"/>
    </location>
</feature>
<feature type="helix" evidence="3">
    <location>
        <begin position="129"/>
        <end position="144"/>
    </location>
</feature>
<feature type="helix" evidence="3">
    <location>
        <begin position="150"/>
        <end position="176"/>
    </location>
</feature>
<feature type="helix" evidence="3">
    <location>
        <begin position="184"/>
        <end position="200"/>
    </location>
</feature>
<feature type="turn" evidence="3">
    <location>
        <begin position="201"/>
        <end position="204"/>
    </location>
</feature>
<feature type="helix" evidence="3">
    <location>
        <begin position="220"/>
        <end position="235"/>
    </location>
</feature>
<feature type="helix" evidence="3">
    <location>
        <begin position="249"/>
        <end position="270"/>
    </location>
</feature>
<feature type="helix" evidence="3">
    <location>
        <begin position="272"/>
        <end position="275"/>
    </location>
</feature>
<feature type="turn" evidence="3">
    <location>
        <begin position="278"/>
        <end position="280"/>
    </location>
</feature>
<feature type="helix" evidence="3">
    <location>
        <begin position="282"/>
        <end position="301"/>
    </location>
</feature>
<feature type="strand" evidence="3">
    <location>
        <begin position="302"/>
        <end position="304"/>
    </location>
</feature>
<feature type="helix" evidence="3">
    <location>
        <begin position="308"/>
        <end position="319"/>
    </location>
</feature>
<feature type="helix" evidence="3">
    <location>
        <begin position="321"/>
        <end position="325"/>
    </location>
</feature>
<feature type="turn" evidence="3">
    <location>
        <begin position="326"/>
        <end position="328"/>
    </location>
</feature>
<feature type="strand" evidence="3">
    <location>
        <begin position="329"/>
        <end position="331"/>
    </location>
</feature>
<feature type="helix" evidence="3">
    <location>
        <begin position="333"/>
        <end position="339"/>
    </location>
</feature>
<feature type="helix" evidence="3">
    <location>
        <begin position="347"/>
        <end position="381"/>
    </location>
</feature>
<feature type="strand" evidence="3">
    <location>
        <begin position="387"/>
        <end position="393"/>
    </location>
</feature>
<feature type="helix" evidence="3">
    <location>
        <begin position="395"/>
        <end position="413"/>
    </location>
</feature>
<feature type="helix" evidence="3">
    <location>
        <begin position="417"/>
        <end position="447"/>
    </location>
</feature>
<feature type="helix" evidence="3">
    <location>
        <begin position="455"/>
        <end position="476"/>
    </location>
</feature>
<feature type="helix" evidence="3">
    <location>
        <begin position="481"/>
        <end position="509"/>
    </location>
</feature>
<feature type="helix" evidence="3">
    <location>
        <begin position="512"/>
        <end position="519"/>
    </location>
</feature>
<feature type="turn" evidence="3">
    <location>
        <begin position="520"/>
        <end position="522"/>
    </location>
</feature>
<feature type="helix" evidence="3">
    <location>
        <begin position="525"/>
        <end position="537"/>
    </location>
</feature>
<feature type="turn" evidence="3">
    <location>
        <begin position="538"/>
        <end position="541"/>
    </location>
</feature>
<feature type="helix" evidence="3">
    <location>
        <begin position="542"/>
        <end position="544"/>
    </location>
</feature>
<feature type="helix" evidence="3">
    <location>
        <begin position="548"/>
        <end position="570"/>
    </location>
</feature>
<feature type="helix" evidence="3">
    <location>
        <begin position="580"/>
        <end position="603"/>
    </location>
</feature>
<feature type="helix" evidence="3">
    <location>
        <begin position="610"/>
        <end position="613"/>
    </location>
</feature>
<feature type="helix" evidence="3">
    <location>
        <begin position="616"/>
        <end position="623"/>
    </location>
</feature>
<feature type="helix" evidence="3">
    <location>
        <begin position="627"/>
        <end position="639"/>
    </location>
</feature>
<feature type="helix" evidence="3">
    <location>
        <begin position="646"/>
        <end position="653"/>
    </location>
</feature>
<feature type="helix" evidence="3">
    <location>
        <begin position="654"/>
        <end position="656"/>
    </location>
</feature>
<feature type="helix" evidence="3">
    <location>
        <begin position="662"/>
        <end position="670"/>
    </location>
</feature>
<feature type="strand" evidence="3">
    <location>
        <begin position="683"/>
        <end position="687"/>
    </location>
</feature>